<evidence type="ECO:0000255" key="1">
    <source>
        <dbReference type="HAMAP-Rule" id="MF_00332"/>
    </source>
</evidence>
<evidence type="ECO:0000256" key="2">
    <source>
        <dbReference type="SAM" id="MobiDB-lite"/>
    </source>
</evidence>
<accession>Q5GSE1</accession>
<dbReference type="EMBL" id="AE017321">
    <property type="protein sequence ID" value="AAW71083.1"/>
    <property type="molecule type" value="Genomic_DNA"/>
</dbReference>
<dbReference type="RefSeq" id="WP_011256693.1">
    <property type="nucleotide sequence ID" value="NC_006833.1"/>
</dbReference>
<dbReference type="SMR" id="Q5GSE1"/>
<dbReference type="STRING" id="292805.Wbm0495"/>
<dbReference type="KEGG" id="wbm:Wbm0495"/>
<dbReference type="eggNOG" id="COG0443">
    <property type="taxonomic scope" value="Bacteria"/>
</dbReference>
<dbReference type="HOGENOM" id="CLU_005965_2_1_5"/>
<dbReference type="Proteomes" id="UP000000534">
    <property type="component" value="Chromosome"/>
</dbReference>
<dbReference type="GO" id="GO:0005524">
    <property type="term" value="F:ATP binding"/>
    <property type="evidence" value="ECO:0007669"/>
    <property type="project" value="UniProtKB-UniRule"/>
</dbReference>
<dbReference type="GO" id="GO:0140662">
    <property type="term" value="F:ATP-dependent protein folding chaperone"/>
    <property type="evidence" value="ECO:0007669"/>
    <property type="project" value="InterPro"/>
</dbReference>
<dbReference type="GO" id="GO:0051082">
    <property type="term" value="F:unfolded protein binding"/>
    <property type="evidence" value="ECO:0007669"/>
    <property type="project" value="InterPro"/>
</dbReference>
<dbReference type="CDD" id="cd10234">
    <property type="entry name" value="ASKHA_NBD_HSP70_DnaK-like"/>
    <property type="match status" value="1"/>
</dbReference>
<dbReference type="FunFam" id="2.60.34.10:FF:000014">
    <property type="entry name" value="Chaperone protein DnaK HSP70"/>
    <property type="match status" value="1"/>
</dbReference>
<dbReference type="FunFam" id="3.30.420.40:FF:000020">
    <property type="entry name" value="Chaperone protein HscA homolog"/>
    <property type="match status" value="1"/>
</dbReference>
<dbReference type="FunFam" id="3.30.30.30:FF:000003">
    <property type="entry name" value="Heat shock protein 9"/>
    <property type="match status" value="1"/>
</dbReference>
<dbReference type="FunFam" id="1.20.1270.10:FF:000001">
    <property type="entry name" value="Molecular chaperone DnaK"/>
    <property type="match status" value="1"/>
</dbReference>
<dbReference type="FunFam" id="3.30.420.40:FF:000004">
    <property type="entry name" value="Molecular chaperone DnaK"/>
    <property type="match status" value="1"/>
</dbReference>
<dbReference type="FunFam" id="3.90.640.10:FF:000003">
    <property type="entry name" value="Molecular chaperone DnaK"/>
    <property type="match status" value="1"/>
</dbReference>
<dbReference type="Gene3D" id="1.20.1270.10">
    <property type="match status" value="1"/>
</dbReference>
<dbReference type="Gene3D" id="3.30.420.40">
    <property type="match status" value="2"/>
</dbReference>
<dbReference type="Gene3D" id="3.90.640.10">
    <property type="entry name" value="Actin, Chain A, domain 4"/>
    <property type="match status" value="1"/>
</dbReference>
<dbReference type="Gene3D" id="2.60.34.10">
    <property type="entry name" value="Substrate Binding Domain Of DNAk, Chain A, domain 1"/>
    <property type="match status" value="1"/>
</dbReference>
<dbReference type="HAMAP" id="MF_00332">
    <property type="entry name" value="DnaK"/>
    <property type="match status" value="1"/>
</dbReference>
<dbReference type="InterPro" id="IPR043129">
    <property type="entry name" value="ATPase_NBD"/>
</dbReference>
<dbReference type="InterPro" id="IPR012725">
    <property type="entry name" value="Chaperone_DnaK"/>
</dbReference>
<dbReference type="InterPro" id="IPR018181">
    <property type="entry name" value="Heat_shock_70_CS"/>
</dbReference>
<dbReference type="InterPro" id="IPR029048">
    <property type="entry name" value="HSP70_C_sf"/>
</dbReference>
<dbReference type="InterPro" id="IPR029047">
    <property type="entry name" value="HSP70_peptide-bd_sf"/>
</dbReference>
<dbReference type="InterPro" id="IPR013126">
    <property type="entry name" value="Hsp_70_fam"/>
</dbReference>
<dbReference type="NCBIfam" id="NF001413">
    <property type="entry name" value="PRK00290.1"/>
    <property type="match status" value="1"/>
</dbReference>
<dbReference type="NCBIfam" id="NF003520">
    <property type="entry name" value="PRK05183.1"/>
    <property type="match status" value="1"/>
</dbReference>
<dbReference type="NCBIfam" id="TIGR02350">
    <property type="entry name" value="prok_dnaK"/>
    <property type="match status" value="1"/>
</dbReference>
<dbReference type="PANTHER" id="PTHR19375">
    <property type="entry name" value="HEAT SHOCK PROTEIN 70KDA"/>
    <property type="match status" value="1"/>
</dbReference>
<dbReference type="Pfam" id="PF00012">
    <property type="entry name" value="HSP70"/>
    <property type="match status" value="1"/>
</dbReference>
<dbReference type="PRINTS" id="PR00301">
    <property type="entry name" value="HEATSHOCK70"/>
</dbReference>
<dbReference type="SUPFAM" id="SSF53067">
    <property type="entry name" value="Actin-like ATPase domain"/>
    <property type="match status" value="2"/>
</dbReference>
<dbReference type="SUPFAM" id="SSF100934">
    <property type="entry name" value="Heat shock protein 70kD (HSP70), C-terminal subdomain"/>
    <property type="match status" value="1"/>
</dbReference>
<dbReference type="SUPFAM" id="SSF100920">
    <property type="entry name" value="Heat shock protein 70kD (HSP70), peptide-binding domain"/>
    <property type="match status" value="1"/>
</dbReference>
<dbReference type="PROSITE" id="PS00297">
    <property type="entry name" value="HSP70_1"/>
    <property type="match status" value="1"/>
</dbReference>
<dbReference type="PROSITE" id="PS00329">
    <property type="entry name" value="HSP70_2"/>
    <property type="match status" value="1"/>
</dbReference>
<dbReference type="PROSITE" id="PS01036">
    <property type="entry name" value="HSP70_3"/>
    <property type="match status" value="1"/>
</dbReference>
<proteinExistence type="inferred from homology"/>
<keyword id="KW-0067">ATP-binding</keyword>
<keyword id="KW-0143">Chaperone</keyword>
<keyword id="KW-0547">Nucleotide-binding</keyword>
<keyword id="KW-0597">Phosphoprotein</keyword>
<keyword id="KW-1185">Reference proteome</keyword>
<keyword id="KW-0346">Stress response</keyword>
<sequence length="635" mass="68938">MGRAIGIDLGTTNSCVAIQGKIIENKEGARTTPSVVAFTSSGERLIGAPAKRQATTNASNTFFATKRLIGRQYGDPEMKDLNVPYKVFAAKNGDAWIKTTDGKEYSPSQIGAFILQNLKEAAEAYLGEEVKDAVITVPAYFNDSQRQATKDAGKIAGLNVLRIVNEPTAAALAYGLDKKHGHTIVVYDLGGGTFDVSILEIGDGVFEVKATNGDTHLGGEDFDNAIVSYLLDEFKKSNGIGLKNDPMAMQRIKEAAEKAKIELSSAMETEINLPFITADANGPKHLNMKLTRAKLESLVNDLIERTMTPCKKALEDTGLSANQIGEVVLVGGMTRMPRVIEKVKEFFGKDPHRGVNPDEVVAIGAAIQAGIVQGDVRDVLLLDVTPLSLGIETLGGVFTPLIERNTTIPTKKSQVFSTAEDNQTAVTIKVHQGERKLAVDNKLLGQFSLEGIPPAPRGIPQIEVTFDIDANGIVHVSAKDKATGKEQKIRIQSSGGLSESEINRMIREAEEKAQEDEKRKKFVEVKNQADSLVHSTEKSLKEYGDKVSPEDKSAIENAVNELKEASKSDNIDDVDSIQQKITNLSQLSMKLGETIYKESQQQQGKESSAGSSTTNEEEKVVDSDYQDIDNKEENK</sequence>
<organism>
    <name type="scientific">Wolbachia sp. subsp. Brugia malayi (strain TRS)</name>
    <dbReference type="NCBI Taxonomy" id="292805"/>
    <lineage>
        <taxon>Bacteria</taxon>
        <taxon>Pseudomonadati</taxon>
        <taxon>Pseudomonadota</taxon>
        <taxon>Alphaproteobacteria</taxon>
        <taxon>Rickettsiales</taxon>
        <taxon>Anaplasmataceae</taxon>
        <taxon>Wolbachieae</taxon>
        <taxon>Wolbachia</taxon>
    </lineage>
</organism>
<feature type="chain" id="PRO_0000226029" description="Chaperone protein DnaK">
    <location>
        <begin position="1"/>
        <end position="635"/>
    </location>
</feature>
<feature type="region of interest" description="Disordered" evidence="2">
    <location>
        <begin position="533"/>
        <end position="552"/>
    </location>
</feature>
<feature type="region of interest" description="Disordered" evidence="2">
    <location>
        <begin position="595"/>
        <end position="635"/>
    </location>
</feature>
<feature type="compositionally biased region" description="Basic and acidic residues" evidence="2">
    <location>
        <begin position="535"/>
        <end position="552"/>
    </location>
</feature>
<feature type="compositionally biased region" description="Low complexity" evidence="2">
    <location>
        <begin position="597"/>
        <end position="612"/>
    </location>
</feature>
<feature type="compositionally biased region" description="Basic and acidic residues" evidence="2">
    <location>
        <begin position="616"/>
        <end position="635"/>
    </location>
</feature>
<feature type="modified residue" description="Phosphothreonine; by autocatalysis" evidence="1">
    <location>
        <position position="193"/>
    </location>
</feature>
<reference key="1">
    <citation type="journal article" date="2005" name="PLoS Biol.">
        <title>The Wolbachia genome of Brugia malayi: endosymbiont evolution within a human pathogenic nematode.</title>
        <authorList>
            <person name="Foster J."/>
            <person name="Ganatra M."/>
            <person name="Kamal I."/>
            <person name="Ware J."/>
            <person name="Makarova K."/>
            <person name="Ivanova N."/>
            <person name="Bhattacharyya A."/>
            <person name="Kapatral V."/>
            <person name="Kumar S."/>
            <person name="Posfai J."/>
            <person name="Vincze T."/>
            <person name="Ingram J."/>
            <person name="Moran L."/>
            <person name="Lapidus A."/>
            <person name="Omelchenko M."/>
            <person name="Kyrpides N."/>
            <person name="Ghedin E."/>
            <person name="Wang S."/>
            <person name="Goltsman E."/>
            <person name="Joukov V."/>
            <person name="Ostrovskaya O."/>
            <person name="Tsukerman K."/>
            <person name="Mazur M."/>
            <person name="Comb D."/>
            <person name="Koonin E."/>
            <person name="Slatko B."/>
        </authorList>
    </citation>
    <scope>NUCLEOTIDE SEQUENCE [LARGE SCALE GENOMIC DNA]</scope>
    <source>
        <strain>TRS</strain>
    </source>
</reference>
<name>DNAK_WOLTR</name>
<protein>
    <recommendedName>
        <fullName evidence="1">Chaperone protein DnaK</fullName>
    </recommendedName>
    <alternativeName>
        <fullName evidence="1">HSP70</fullName>
    </alternativeName>
    <alternativeName>
        <fullName evidence="1">Heat shock 70 kDa protein</fullName>
    </alternativeName>
    <alternativeName>
        <fullName evidence="1">Heat shock protein 70</fullName>
    </alternativeName>
</protein>
<comment type="function">
    <text evidence="1">Acts as a chaperone.</text>
</comment>
<comment type="induction">
    <text evidence="1">By stress conditions e.g. heat shock.</text>
</comment>
<comment type="similarity">
    <text evidence="1">Belongs to the heat shock protein 70 family.</text>
</comment>
<gene>
    <name evidence="1" type="primary">dnaK</name>
    <name type="ordered locus">Wbm0495</name>
</gene>